<organism>
    <name type="scientific">Drosophila simulans</name>
    <name type="common">Fruit fly</name>
    <dbReference type="NCBI Taxonomy" id="7240"/>
    <lineage>
        <taxon>Eukaryota</taxon>
        <taxon>Metazoa</taxon>
        <taxon>Ecdysozoa</taxon>
        <taxon>Arthropoda</taxon>
        <taxon>Hexapoda</taxon>
        <taxon>Insecta</taxon>
        <taxon>Pterygota</taxon>
        <taxon>Neoptera</taxon>
        <taxon>Endopterygota</taxon>
        <taxon>Diptera</taxon>
        <taxon>Brachycera</taxon>
        <taxon>Muscomorpha</taxon>
        <taxon>Ephydroidea</taxon>
        <taxon>Drosophilidae</taxon>
        <taxon>Drosophila</taxon>
        <taxon>Sophophora</taxon>
    </lineage>
</organism>
<keyword id="KW-0251">Elongation factor</keyword>
<keyword id="KW-0342">GTP-binding</keyword>
<keyword id="KW-0496">Mitochondrion</keyword>
<keyword id="KW-0547">Nucleotide-binding</keyword>
<keyword id="KW-0648">Protein biosynthesis</keyword>
<keyword id="KW-1185">Reference proteome</keyword>
<sequence length="745" mass="83510">MSLITRLLTGNNTLRLRALESLGKAGYSSHAKFSEHKPIERIRNIGISAHIDSGKTTLTERILFYTGRIAEMHEVRGKDNVGATMDSMELERQRGITIQSAATYTLWKDTNINIIDTPGHVDFTVEVERALRVLDGAVLVLCAVGGVQSQTLTVNRQMKRYNVPCLAFINKLDRLGSNPYRVLSQMRSKMNHNAAFIQLPIGVESNCKGIVDLVREKAIYFEGEHGMDIRLDEIPQDMRVESLERRQELIEHLSNADETLGELFLEEKPFTEDDIKAALRRTCINRTFTPVLVGTALKNKGVQPLLDAVLDYLPNPGEVENLGFIEKEGQDPEKVVLNPARDGKDPFVGLAFKLEAGRFGQLTYLRCYQGVLRKGDNIFNARTNKKVRIARLVRLHSNQMEDVNEVYAGDIFALFGVDCASGDTFTTNPKNNLSMESIFVPEPVVSMAIKPNNTKDRDNFSKAIARFTKEDPTFHFFFDNDVKETLVSGMGELHLEIYAQRMEREYGCPVTLGKPKVAFRETLVGPCEFDYLHKKQSGGSGQYARIIGVMEPLPPNQNTLLEFVDETVGTNVPKQFVPGVEKGYREMAEKGMLSGHKLSGIRFRLQDGGHHIVDSSELAFMLAAHGAIKEVFQNGSWQILEPIMLVEVTAPEEFQGAVMGHLSKRHGIITGTEGTEGWFTVYAEVPLNDMFGYAGELRSSTQGKGEFTMEYSRYSPCLPDVQDQIVRQYQESQGLAQPDKKKKKN</sequence>
<comment type="function">
    <text evidence="2">Mitochondrial GTPase that catalyzes the GTP-dependent ribosomal translocation step during translation elongation. During this step, the ribosome changes from the pre-translocational (PRE) to the post-translocational (POST) state as the newly formed A-site-bound peptidyl-tRNA and P-site-bound deacylated tRNA move to the P and E sites, respectively. Catalyzes the coordinated movement of the two tRNA molecules, the mRNA and conformational changes in the ribosome. Essential during development as it acts as a retrograde signal from mitochondria to the nucleus to slow down cell proliferation if mitochondrial energy output is low (By similarity).</text>
</comment>
<comment type="pathway">
    <text evidence="2">Protein biosynthesis; polypeptide chain elongation.</text>
</comment>
<comment type="subcellular location">
    <subcellularLocation>
        <location evidence="2">Mitochondrion</location>
    </subcellularLocation>
</comment>
<comment type="miscellaneous">
    <text evidence="2">This protein may be expected to contain an N-terminal transit peptide but none has been predicted.</text>
</comment>
<comment type="similarity">
    <text evidence="3">Belongs to the TRAFAC class translation factor GTPase superfamily. Classic translation factor GTPase family. EF-G/EF-2 subfamily.</text>
</comment>
<evidence type="ECO:0000250" key="1">
    <source>
        <dbReference type="UniProtKB" id="Q9VM33"/>
    </source>
</evidence>
<evidence type="ECO:0000255" key="2">
    <source>
        <dbReference type="HAMAP-Rule" id="MF_03061"/>
    </source>
</evidence>
<evidence type="ECO:0000305" key="3"/>
<gene>
    <name evidence="1" type="primary">mEFG1</name>
    <name evidence="1" type="synonym">ico</name>
    <name type="ORF">GD22506</name>
</gene>
<accession>B4Q5D5</accession>
<feature type="chain" id="PRO_0000385551" description="Elongation factor G, mitochondrial">
    <location>
        <begin position="1"/>
        <end position="745"/>
    </location>
</feature>
<feature type="domain" description="tr-type G">
    <location>
        <begin position="40"/>
        <end position="317"/>
    </location>
</feature>
<feature type="binding site" evidence="2">
    <location>
        <begin position="49"/>
        <end position="56"/>
    </location>
    <ligand>
        <name>GTP</name>
        <dbReference type="ChEBI" id="CHEBI:37565"/>
    </ligand>
</feature>
<feature type="binding site" evidence="2">
    <location>
        <begin position="116"/>
        <end position="120"/>
    </location>
    <ligand>
        <name>GTP</name>
        <dbReference type="ChEBI" id="CHEBI:37565"/>
    </ligand>
</feature>
<feature type="binding site" evidence="2">
    <location>
        <begin position="170"/>
        <end position="173"/>
    </location>
    <ligand>
        <name>GTP</name>
        <dbReference type="ChEBI" id="CHEBI:37565"/>
    </ligand>
</feature>
<name>EFGM_DROSI</name>
<proteinExistence type="inferred from homology"/>
<reference key="1">
    <citation type="journal article" date="2007" name="Nature">
        <title>Evolution of genes and genomes on the Drosophila phylogeny.</title>
        <authorList>
            <consortium name="Drosophila 12 genomes consortium"/>
        </authorList>
    </citation>
    <scope>NUCLEOTIDE SEQUENCE [LARGE SCALE GENOMIC DNA]</scope>
</reference>
<protein>
    <recommendedName>
        <fullName evidence="2">Elongation factor G, mitochondrial</fullName>
        <shortName evidence="2">EF-Gmt</shortName>
    </recommendedName>
    <alternativeName>
        <fullName evidence="2">Elongation factor G 1, mitochondrial</fullName>
        <shortName evidence="2">mEF-G 1</shortName>
    </alternativeName>
    <alternativeName>
        <fullName evidence="2">Elongation factor G1</fullName>
    </alternativeName>
</protein>
<dbReference type="EMBL" id="CM000361">
    <property type="protein sequence ID" value="EDX04068.1"/>
    <property type="molecule type" value="Genomic_DNA"/>
</dbReference>
<dbReference type="SMR" id="B4Q5D5"/>
<dbReference type="STRING" id="7240.B4Q5D5"/>
<dbReference type="EnsemblMetazoa" id="FBtr0222416">
    <property type="protein sequence ID" value="FBpp0220908"/>
    <property type="gene ID" value="FBgn0193908"/>
</dbReference>
<dbReference type="EnsemblMetazoa" id="XM_002078447.3">
    <property type="protein sequence ID" value="XP_002078483.1"/>
    <property type="gene ID" value="LOC6731327"/>
</dbReference>
<dbReference type="GeneID" id="6731327"/>
<dbReference type="CTD" id="34004"/>
<dbReference type="HOGENOM" id="CLU_002794_4_0_1"/>
<dbReference type="OMA" id="GQFAKVQ"/>
<dbReference type="OrthoDB" id="198619at2759"/>
<dbReference type="PhylomeDB" id="B4Q5D5"/>
<dbReference type="UniPathway" id="UPA00345"/>
<dbReference type="Proteomes" id="UP000000304">
    <property type="component" value="Chromosome 2L"/>
</dbReference>
<dbReference type="Bgee" id="FBgn0193908">
    <property type="expression patterns" value="Expressed in embryo and 3 other cell types or tissues"/>
</dbReference>
<dbReference type="GO" id="GO:0005739">
    <property type="term" value="C:mitochondrion"/>
    <property type="evidence" value="ECO:0007669"/>
    <property type="project" value="UniProtKB-SubCell"/>
</dbReference>
<dbReference type="GO" id="GO:0005634">
    <property type="term" value="C:nucleus"/>
    <property type="evidence" value="ECO:0007669"/>
    <property type="project" value="EnsemblMetazoa"/>
</dbReference>
<dbReference type="GO" id="GO:0005525">
    <property type="term" value="F:GTP binding"/>
    <property type="evidence" value="ECO:0007669"/>
    <property type="project" value="UniProtKB-UniRule"/>
</dbReference>
<dbReference type="GO" id="GO:0003924">
    <property type="term" value="F:GTPase activity"/>
    <property type="evidence" value="ECO:0000250"/>
    <property type="project" value="UniProtKB"/>
</dbReference>
<dbReference type="GO" id="GO:0003746">
    <property type="term" value="F:translation elongation factor activity"/>
    <property type="evidence" value="ECO:0000250"/>
    <property type="project" value="UniProtKB"/>
</dbReference>
<dbReference type="GO" id="GO:0070125">
    <property type="term" value="P:mitochondrial translational elongation"/>
    <property type="evidence" value="ECO:0000250"/>
    <property type="project" value="UniProtKB"/>
</dbReference>
<dbReference type="CDD" id="cd01886">
    <property type="entry name" value="EF-G"/>
    <property type="match status" value="1"/>
</dbReference>
<dbReference type="CDD" id="cd16262">
    <property type="entry name" value="EFG_III"/>
    <property type="match status" value="1"/>
</dbReference>
<dbReference type="CDD" id="cd01434">
    <property type="entry name" value="EFG_mtEFG1_IV"/>
    <property type="match status" value="1"/>
</dbReference>
<dbReference type="CDD" id="cd04097">
    <property type="entry name" value="mtEFG1_C"/>
    <property type="match status" value="1"/>
</dbReference>
<dbReference type="CDD" id="cd04091">
    <property type="entry name" value="mtEFG1_II_like"/>
    <property type="match status" value="1"/>
</dbReference>
<dbReference type="FunFam" id="3.30.230.10:FF:000003">
    <property type="entry name" value="Elongation factor G"/>
    <property type="match status" value="1"/>
</dbReference>
<dbReference type="FunFam" id="3.30.70.240:FF:000001">
    <property type="entry name" value="Elongation factor G"/>
    <property type="match status" value="1"/>
</dbReference>
<dbReference type="FunFam" id="3.30.70.870:FF:000001">
    <property type="entry name" value="Elongation factor G"/>
    <property type="match status" value="1"/>
</dbReference>
<dbReference type="FunFam" id="2.40.30.10:FF:000022">
    <property type="entry name" value="Elongation factor G, mitochondrial"/>
    <property type="match status" value="1"/>
</dbReference>
<dbReference type="FunFam" id="3.40.50.300:FF:000539">
    <property type="entry name" value="Elongation factor G, mitochondrial"/>
    <property type="match status" value="1"/>
</dbReference>
<dbReference type="Gene3D" id="3.30.230.10">
    <property type="match status" value="1"/>
</dbReference>
<dbReference type="Gene3D" id="3.30.70.240">
    <property type="match status" value="1"/>
</dbReference>
<dbReference type="Gene3D" id="3.30.70.870">
    <property type="entry name" value="Elongation Factor G (Translational Gtpase), domain 3"/>
    <property type="match status" value="1"/>
</dbReference>
<dbReference type="Gene3D" id="3.40.50.300">
    <property type="entry name" value="P-loop containing nucleotide triphosphate hydrolases"/>
    <property type="match status" value="1"/>
</dbReference>
<dbReference type="Gene3D" id="2.40.30.10">
    <property type="entry name" value="Translation factors"/>
    <property type="match status" value="1"/>
</dbReference>
<dbReference type="HAMAP" id="MF_00054_B">
    <property type="entry name" value="EF_G_EF_2_B"/>
    <property type="match status" value="1"/>
</dbReference>
<dbReference type="InterPro" id="IPR041095">
    <property type="entry name" value="EFG_II"/>
</dbReference>
<dbReference type="InterPro" id="IPR009022">
    <property type="entry name" value="EFG_III"/>
</dbReference>
<dbReference type="InterPro" id="IPR035647">
    <property type="entry name" value="EFG_III/V"/>
</dbReference>
<dbReference type="InterPro" id="IPR047872">
    <property type="entry name" value="EFG_IV"/>
</dbReference>
<dbReference type="InterPro" id="IPR035649">
    <property type="entry name" value="EFG_V"/>
</dbReference>
<dbReference type="InterPro" id="IPR000640">
    <property type="entry name" value="EFG_V-like"/>
</dbReference>
<dbReference type="InterPro" id="IPR004161">
    <property type="entry name" value="EFTu-like_2"/>
</dbReference>
<dbReference type="InterPro" id="IPR031157">
    <property type="entry name" value="G_TR_CS"/>
</dbReference>
<dbReference type="InterPro" id="IPR027417">
    <property type="entry name" value="P-loop_NTPase"/>
</dbReference>
<dbReference type="InterPro" id="IPR020568">
    <property type="entry name" value="Ribosomal_Su5_D2-typ_SF"/>
</dbReference>
<dbReference type="InterPro" id="IPR014721">
    <property type="entry name" value="Ribsml_uS5_D2-typ_fold_subgr"/>
</dbReference>
<dbReference type="InterPro" id="IPR005225">
    <property type="entry name" value="Small_GTP-bd"/>
</dbReference>
<dbReference type="InterPro" id="IPR000795">
    <property type="entry name" value="T_Tr_GTP-bd_dom"/>
</dbReference>
<dbReference type="InterPro" id="IPR009000">
    <property type="entry name" value="Transl_B-barrel_sf"/>
</dbReference>
<dbReference type="InterPro" id="IPR004540">
    <property type="entry name" value="Transl_elong_EFG/EF2"/>
</dbReference>
<dbReference type="InterPro" id="IPR005517">
    <property type="entry name" value="Transl_elong_EFG/EF2_IV"/>
</dbReference>
<dbReference type="NCBIfam" id="TIGR00484">
    <property type="entry name" value="EF-G"/>
    <property type="match status" value="1"/>
</dbReference>
<dbReference type="NCBIfam" id="NF009381">
    <property type="entry name" value="PRK12740.1-5"/>
    <property type="match status" value="1"/>
</dbReference>
<dbReference type="NCBIfam" id="TIGR00231">
    <property type="entry name" value="small_GTP"/>
    <property type="match status" value="1"/>
</dbReference>
<dbReference type="PANTHER" id="PTHR43636">
    <property type="entry name" value="ELONGATION FACTOR G, MITOCHONDRIAL"/>
    <property type="match status" value="1"/>
</dbReference>
<dbReference type="PANTHER" id="PTHR43636:SF2">
    <property type="entry name" value="ELONGATION FACTOR G, MITOCHONDRIAL"/>
    <property type="match status" value="1"/>
</dbReference>
<dbReference type="Pfam" id="PF00679">
    <property type="entry name" value="EFG_C"/>
    <property type="match status" value="1"/>
</dbReference>
<dbReference type="Pfam" id="PF14492">
    <property type="entry name" value="EFG_III"/>
    <property type="match status" value="1"/>
</dbReference>
<dbReference type="Pfam" id="PF03764">
    <property type="entry name" value="EFG_IV"/>
    <property type="match status" value="1"/>
</dbReference>
<dbReference type="Pfam" id="PF00009">
    <property type="entry name" value="GTP_EFTU"/>
    <property type="match status" value="1"/>
</dbReference>
<dbReference type="Pfam" id="PF03144">
    <property type="entry name" value="GTP_EFTU_D2"/>
    <property type="match status" value="1"/>
</dbReference>
<dbReference type="PRINTS" id="PR00315">
    <property type="entry name" value="ELONGATNFCT"/>
</dbReference>
<dbReference type="SMART" id="SM00838">
    <property type="entry name" value="EFG_C"/>
    <property type="match status" value="1"/>
</dbReference>
<dbReference type="SMART" id="SM00889">
    <property type="entry name" value="EFG_IV"/>
    <property type="match status" value="1"/>
</dbReference>
<dbReference type="SUPFAM" id="SSF54980">
    <property type="entry name" value="EF-G C-terminal domain-like"/>
    <property type="match status" value="2"/>
</dbReference>
<dbReference type="SUPFAM" id="SSF52540">
    <property type="entry name" value="P-loop containing nucleoside triphosphate hydrolases"/>
    <property type="match status" value="1"/>
</dbReference>
<dbReference type="SUPFAM" id="SSF54211">
    <property type="entry name" value="Ribosomal protein S5 domain 2-like"/>
    <property type="match status" value="1"/>
</dbReference>
<dbReference type="SUPFAM" id="SSF50447">
    <property type="entry name" value="Translation proteins"/>
    <property type="match status" value="1"/>
</dbReference>
<dbReference type="PROSITE" id="PS00301">
    <property type="entry name" value="G_TR_1"/>
    <property type="match status" value="1"/>
</dbReference>
<dbReference type="PROSITE" id="PS51722">
    <property type="entry name" value="G_TR_2"/>
    <property type="match status" value="1"/>
</dbReference>